<gene>
    <name evidence="1" type="primary">yqgF</name>
    <name type="ordered locus">YPTB3209</name>
</gene>
<name>YQGF_YERPS</name>
<accession>Q666N9</accession>
<proteinExistence type="inferred from homology"/>
<feature type="chain" id="PRO_0000172182" description="Putative pre-16S rRNA nuclease">
    <location>
        <begin position="1"/>
        <end position="140"/>
    </location>
</feature>
<sequence length="140" mass="15330">MANRTIIAFDFGTKSIGVAIGQEVTGTARALTAFKAQDGTPDWQQVEKLLKEWQPNLVVVGLPLNMDGTEQPLTARARRFANRLHGRFGVQIALQDERLSTVEARANLFDRGGYRALDKGSVDAASAVIILESWFDEQAG</sequence>
<keyword id="KW-0963">Cytoplasm</keyword>
<keyword id="KW-0378">Hydrolase</keyword>
<keyword id="KW-0540">Nuclease</keyword>
<keyword id="KW-0690">Ribosome biogenesis</keyword>
<evidence type="ECO:0000255" key="1">
    <source>
        <dbReference type="HAMAP-Rule" id="MF_00651"/>
    </source>
</evidence>
<protein>
    <recommendedName>
        <fullName evidence="1">Putative pre-16S rRNA nuclease</fullName>
        <ecNumber evidence="1">3.1.-.-</ecNumber>
    </recommendedName>
</protein>
<comment type="function">
    <text evidence="1">Could be a nuclease involved in processing of the 5'-end of pre-16S rRNA.</text>
</comment>
<comment type="subcellular location">
    <subcellularLocation>
        <location evidence="1">Cytoplasm</location>
    </subcellularLocation>
</comment>
<comment type="similarity">
    <text evidence="1">Belongs to the YqgF nuclease family.</text>
</comment>
<organism>
    <name type="scientific">Yersinia pseudotuberculosis serotype I (strain IP32953)</name>
    <dbReference type="NCBI Taxonomy" id="273123"/>
    <lineage>
        <taxon>Bacteria</taxon>
        <taxon>Pseudomonadati</taxon>
        <taxon>Pseudomonadota</taxon>
        <taxon>Gammaproteobacteria</taxon>
        <taxon>Enterobacterales</taxon>
        <taxon>Yersiniaceae</taxon>
        <taxon>Yersinia</taxon>
    </lineage>
</organism>
<reference key="1">
    <citation type="journal article" date="2004" name="Proc. Natl. Acad. Sci. U.S.A.">
        <title>Insights into the evolution of Yersinia pestis through whole-genome comparison with Yersinia pseudotuberculosis.</title>
        <authorList>
            <person name="Chain P.S.G."/>
            <person name="Carniel E."/>
            <person name="Larimer F.W."/>
            <person name="Lamerdin J."/>
            <person name="Stoutland P.O."/>
            <person name="Regala W.M."/>
            <person name="Georgescu A.M."/>
            <person name="Vergez L.M."/>
            <person name="Land M.L."/>
            <person name="Motin V.L."/>
            <person name="Brubaker R.R."/>
            <person name="Fowler J."/>
            <person name="Hinnebusch J."/>
            <person name="Marceau M."/>
            <person name="Medigue C."/>
            <person name="Simonet M."/>
            <person name="Chenal-Francisque V."/>
            <person name="Souza B."/>
            <person name="Dacheux D."/>
            <person name="Elliott J.M."/>
            <person name="Derbise A."/>
            <person name="Hauser L.J."/>
            <person name="Garcia E."/>
        </authorList>
    </citation>
    <scope>NUCLEOTIDE SEQUENCE [LARGE SCALE GENOMIC DNA]</scope>
    <source>
        <strain>IP32953</strain>
    </source>
</reference>
<dbReference type="EC" id="3.1.-.-" evidence="1"/>
<dbReference type="EMBL" id="BX936398">
    <property type="protein sequence ID" value="CAH22447.1"/>
    <property type="molecule type" value="Genomic_DNA"/>
</dbReference>
<dbReference type="RefSeq" id="WP_011192972.1">
    <property type="nucleotide sequence ID" value="NC_006155.1"/>
</dbReference>
<dbReference type="SMR" id="Q666N9"/>
<dbReference type="KEGG" id="ypo:BZ17_3401"/>
<dbReference type="KEGG" id="yps:YPTB3209"/>
<dbReference type="PATRIC" id="fig|273123.14.peg.3568"/>
<dbReference type="Proteomes" id="UP000001011">
    <property type="component" value="Chromosome"/>
</dbReference>
<dbReference type="GO" id="GO:0005829">
    <property type="term" value="C:cytosol"/>
    <property type="evidence" value="ECO:0007669"/>
    <property type="project" value="TreeGrafter"/>
</dbReference>
<dbReference type="GO" id="GO:0004518">
    <property type="term" value="F:nuclease activity"/>
    <property type="evidence" value="ECO:0007669"/>
    <property type="project" value="UniProtKB-KW"/>
</dbReference>
<dbReference type="GO" id="GO:0000967">
    <property type="term" value="P:rRNA 5'-end processing"/>
    <property type="evidence" value="ECO:0007669"/>
    <property type="project" value="UniProtKB-UniRule"/>
</dbReference>
<dbReference type="CDD" id="cd16964">
    <property type="entry name" value="YqgF"/>
    <property type="match status" value="1"/>
</dbReference>
<dbReference type="FunFam" id="3.30.420.140:FF:000002">
    <property type="entry name" value="Putative pre-16S rRNA nuclease"/>
    <property type="match status" value="1"/>
</dbReference>
<dbReference type="Gene3D" id="3.30.420.140">
    <property type="entry name" value="YqgF/RNase H-like domain"/>
    <property type="match status" value="1"/>
</dbReference>
<dbReference type="HAMAP" id="MF_00651">
    <property type="entry name" value="Nuclease_YqgF"/>
    <property type="match status" value="1"/>
</dbReference>
<dbReference type="InterPro" id="IPR012337">
    <property type="entry name" value="RNaseH-like_sf"/>
</dbReference>
<dbReference type="InterPro" id="IPR005227">
    <property type="entry name" value="YqgF"/>
</dbReference>
<dbReference type="InterPro" id="IPR006641">
    <property type="entry name" value="YqgF/RNaseH-like_dom"/>
</dbReference>
<dbReference type="InterPro" id="IPR037027">
    <property type="entry name" value="YqgF/RNaseH-like_dom_sf"/>
</dbReference>
<dbReference type="NCBIfam" id="TIGR00250">
    <property type="entry name" value="RNAse_H_YqgF"/>
    <property type="match status" value="1"/>
</dbReference>
<dbReference type="PANTHER" id="PTHR33317">
    <property type="entry name" value="POLYNUCLEOTIDYL TRANSFERASE, RIBONUCLEASE H-LIKE SUPERFAMILY PROTEIN"/>
    <property type="match status" value="1"/>
</dbReference>
<dbReference type="PANTHER" id="PTHR33317:SF4">
    <property type="entry name" value="POLYNUCLEOTIDYL TRANSFERASE, RIBONUCLEASE H-LIKE SUPERFAMILY PROTEIN"/>
    <property type="match status" value="1"/>
</dbReference>
<dbReference type="Pfam" id="PF03652">
    <property type="entry name" value="RuvX"/>
    <property type="match status" value="1"/>
</dbReference>
<dbReference type="SMART" id="SM00732">
    <property type="entry name" value="YqgFc"/>
    <property type="match status" value="1"/>
</dbReference>
<dbReference type="SUPFAM" id="SSF53098">
    <property type="entry name" value="Ribonuclease H-like"/>
    <property type="match status" value="1"/>
</dbReference>